<keyword id="KW-0378">Hydrolase</keyword>
<keyword id="KW-0408">Iron</keyword>
<keyword id="KW-0479">Metal-binding</keyword>
<keyword id="KW-0648">Protein biosynthesis</keyword>
<keyword id="KW-1185">Reference proteome</keyword>
<name>DEF2_XANCP</name>
<comment type="function">
    <text evidence="1">Removes the formyl group from the N-terminal Met of newly synthesized proteins. Requires at least a dipeptide for an efficient rate of reaction. N-terminal L-methionine is a prerequisite for activity but the enzyme has broad specificity at other positions.</text>
</comment>
<comment type="catalytic activity">
    <reaction evidence="1">
        <text>N-terminal N-formyl-L-methionyl-[peptide] + H2O = N-terminal L-methionyl-[peptide] + formate</text>
        <dbReference type="Rhea" id="RHEA:24420"/>
        <dbReference type="Rhea" id="RHEA-COMP:10639"/>
        <dbReference type="Rhea" id="RHEA-COMP:10640"/>
        <dbReference type="ChEBI" id="CHEBI:15377"/>
        <dbReference type="ChEBI" id="CHEBI:15740"/>
        <dbReference type="ChEBI" id="CHEBI:49298"/>
        <dbReference type="ChEBI" id="CHEBI:64731"/>
        <dbReference type="EC" id="3.5.1.88"/>
    </reaction>
</comment>
<comment type="cofactor">
    <cofactor evidence="1">
        <name>Fe(2+)</name>
        <dbReference type="ChEBI" id="CHEBI:29033"/>
    </cofactor>
    <text evidence="1">Binds 1 Fe(2+) ion.</text>
</comment>
<comment type="similarity">
    <text evidence="1">Belongs to the polypeptide deformylase family.</text>
</comment>
<accession>Q8P4F9</accession>
<evidence type="ECO:0000255" key="1">
    <source>
        <dbReference type="HAMAP-Rule" id="MF_00163"/>
    </source>
</evidence>
<organism>
    <name type="scientific">Xanthomonas campestris pv. campestris (strain ATCC 33913 / DSM 3586 / NCPPB 528 / LMG 568 / P 25)</name>
    <dbReference type="NCBI Taxonomy" id="190485"/>
    <lineage>
        <taxon>Bacteria</taxon>
        <taxon>Pseudomonadati</taxon>
        <taxon>Pseudomonadota</taxon>
        <taxon>Gammaproteobacteria</taxon>
        <taxon>Lysobacterales</taxon>
        <taxon>Lysobacteraceae</taxon>
        <taxon>Xanthomonas</taxon>
    </lineage>
</organism>
<dbReference type="EC" id="3.5.1.88" evidence="1"/>
<dbReference type="EMBL" id="AE008922">
    <property type="protein sequence ID" value="AAM43006.1"/>
    <property type="molecule type" value="Genomic_DNA"/>
</dbReference>
<dbReference type="RefSeq" id="NP_639094.1">
    <property type="nucleotide sequence ID" value="NC_003902.1"/>
</dbReference>
<dbReference type="SMR" id="Q8P4F9"/>
<dbReference type="STRING" id="190485.XCC3749"/>
<dbReference type="EnsemblBacteria" id="AAM43006">
    <property type="protein sequence ID" value="AAM43006"/>
    <property type="gene ID" value="XCC3749"/>
</dbReference>
<dbReference type="KEGG" id="xcc:XCC3749"/>
<dbReference type="PATRIC" id="fig|190485.4.peg.4011"/>
<dbReference type="eggNOG" id="COG0242">
    <property type="taxonomic scope" value="Bacteria"/>
</dbReference>
<dbReference type="HOGENOM" id="CLU_061901_2_1_6"/>
<dbReference type="OrthoDB" id="9804313at2"/>
<dbReference type="Proteomes" id="UP000001010">
    <property type="component" value="Chromosome"/>
</dbReference>
<dbReference type="GO" id="GO:0046872">
    <property type="term" value="F:metal ion binding"/>
    <property type="evidence" value="ECO:0007669"/>
    <property type="project" value="UniProtKB-KW"/>
</dbReference>
<dbReference type="GO" id="GO:0042586">
    <property type="term" value="F:peptide deformylase activity"/>
    <property type="evidence" value="ECO:0000318"/>
    <property type="project" value="GO_Central"/>
</dbReference>
<dbReference type="GO" id="GO:0043686">
    <property type="term" value="P:co-translational protein modification"/>
    <property type="evidence" value="ECO:0000318"/>
    <property type="project" value="GO_Central"/>
</dbReference>
<dbReference type="GO" id="GO:0006412">
    <property type="term" value="P:translation"/>
    <property type="evidence" value="ECO:0007669"/>
    <property type="project" value="UniProtKB-UniRule"/>
</dbReference>
<dbReference type="CDD" id="cd00487">
    <property type="entry name" value="Pep_deformylase"/>
    <property type="match status" value="1"/>
</dbReference>
<dbReference type="FunFam" id="3.90.45.10:FF:000001">
    <property type="entry name" value="Peptide deformylase"/>
    <property type="match status" value="1"/>
</dbReference>
<dbReference type="Gene3D" id="3.90.45.10">
    <property type="entry name" value="Peptide deformylase"/>
    <property type="match status" value="1"/>
</dbReference>
<dbReference type="HAMAP" id="MF_00163">
    <property type="entry name" value="Pep_deformylase"/>
    <property type="match status" value="1"/>
</dbReference>
<dbReference type="InterPro" id="IPR023635">
    <property type="entry name" value="Peptide_deformylase"/>
</dbReference>
<dbReference type="InterPro" id="IPR036821">
    <property type="entry name" value="Peptide_deformylase_sf"/>
</dbReference>
<dbReference type="NCBIfam" id="TIGR00079">
    <property type="entry name" value="pept_deformyl"/>
    <property type="match status" value="1"/>
</dbReference>
<dbReference type="NCBIfam" id="NF001159">
    <property type="entry name" value="PRK00150.1-3"/>
    <property type="match status" value="1"/>
</dbReference>
<dbReference type="PANTHER" id="PTHR10458">
    <property type="entry name" value="PEPTIDE DEFORMYLASE"/>
    <property type="match status" value="1"/>
</dbReference>
<dbReference type="PANTHER" id="PTHR10458:SF21">
    <property type="entry name" value="PEPTIDE DEFORMYLASE"/>
    <property type="match status" value="1"/>
</dbReference>
<dbReference type="Pfam" id="PF01327">
    <property type="entry name" value="Pep_deformylase"/>
    <property type="match status" value="1"/>
</dbReference>
<dbReference type="PIRSF" id="PIRSF004749">
    <property type="entry name" value="Pep_def"/>
    <property type="match status" value="1"/>
</dbReference>
<dbReference type="PRINTS" id="PR01576">
    <property type="entry name" value="PDEFORMYLASE"/>
</dbReference>
<dbReference type="SUPFAM" id="SSF56420">
    <property type="entry name" value="Peptide deformylase"/>
    <property type="match status" value="1"/>
</dbReference>
<feature type="chain" id="PRO_0000082886" description="Peptide deformylase 2">
    <location>
        <begin position="1"/>
        <end position="170"/>
    </location>
</feature>
<feature type="active site" evidence="1">
    <location>
        <position position="137"/>
    </location>
</feature>
<feature type="binding site" evidence="1">
    <location>
        <position position="94"/>
    </location>
    <ligand>
        <name>Fe cation</name>
        <dbReference type="ChEBI" id="CHEBI:24875"/>
    </ligand>
</feature>
<feature type="binding site" evidence="1">
    <location>
        <position position="136"/>
    </location>
    <ligand>
        <name>Fe cation</name>
        <dbReference type="ChEBI" id="CHEBI:24875"/>
    </ligand>
</feature>
<feature type="binding site" evidence="1">
    <location>
        <position position="140"/>
    </location>
    <ligand>
        <name>Fe cation</name>
        <dbReference type="ChEBI" id="CHEBI:24875"/>
    </ligand>
</feature>
<proteinExistence type="inferred from homology"/>
<gene>
    <name evidence="1" type="primary">def2</name>
    <name type="ordered locus">XCC3749</name>
</gene>
<protein>
    <recommendedName>
        <fullName evidence="1">Peptide deformylase 2</fullName>
        <shortName evidence="1">PDF 2</shortName>
        <ecNumber evidence="1">3.5.1.88</ecNumber>
    </recommendedName>
    <alternativeName>
        <fullName evidence="1">Polypeptide deformylase 2</fullName>
    </alternativeName>
</protein>
<sequence length="170" mass="19047">MALLPILEFPDPRLRTKAVPVDAAEVVSPAFQTLLDDMFQTMYEAPGIGLAASQVDVHKRFMVIDVSEEKDAPQVFINPEIVTRQGEQVYQEGCLSVPGIFADVSRADAITVRYLDRQGQPQELSTDGLLAVCIQHEMDHLDGKLFVDYLSPLKREMVRKKLAKLRKHVA</sequence>
<reference key="1">
    <citation type="journal article" date="2002" name="Nature">
        <title>Comparison of the genomes of two Xanthomonas pathogens with differing host specificities.</title>
        <authorList>
            <person name="da Silva A.C.R."/>
            <person name="Ferro J.A."/>
            <person name="Reinach F.C."/>
            <person name="Farah C.S."/>
            <person name="Furlan L.R."/>
            <person name="Quaggio R.B."/>
            <person name="Monteiro-Vitorello C.B."/>
            <person name="Van Sluys M.A."/>
            <person name="Almeida N.F. Jr."/>
            <person name="Alves L.M.C."/>
            <person name="do Amaral A.M."/>
            <person name="Bertolini M.C."/>
            <person name="Camargo L.E.A."/>
            <person name="Camarotte G."/>
            <person name="Cannavan F."/>
            <person name="Cardozo J."/>
            <person name="Chambergo F."/>
            <person name="Ciapina L.P."/>
            <person name="Cicarelli R.M.B."/>
            <person name="Coutinho L.L."/>
            <person name="Cursino-Santos J.R."/>
            <person name="El-Dorry H."/>
            <person name="Faria J.B."/>
            <person name="Ferreira A.J.S."/>
            <person name="Ferreira R.C.C."/>
            <person name="Ferro M.I.T."/>
            <person name="Formighieri E.F."/>
            <person name="Franco M.C."/>
            <person name="Greggio C.C."/>
            <person name="Gruber A."/>
            <person name="Katsuyama A.M."/>
            <person name="Kishi L.T."/>
            <person name="Leite R.P."/>
            <person name="Lemos E.G.M."/>
            <person name="Lemos M.V.F."/>
            <person name="Locali E.C."/>
            <person name="Machado M.A."/>
            <person name="Madeira A.M.B.N."/>
            <person name="Martinez-Rossi N.M."/>
            <person name="Martins E.C."/>
            <person name="Meidanis J."/>
            <person name="Menck C.F.M."/>
            <person name="Miyaki C.Y."/>
            <person name="Moon D.H."/>
            <person name="Moreira L.M."/>
            <person name="Novo M.T.M."/>
            <person name="Okura V.K."/>
            <person name="Oliveira M.C."/>
            <person name="Oliveira V.R."/>
            <person name="Pereira H.A."/>
            <person name="Rossi A."/>
            <person name="Sena J.A.D."/>
            <person name="Silva C."/>
            <person name="de Souza R.F."/>
            <person name="Spinola L.A.F."/>
            <person name="Takita M.A."/>
            <person name="Tamura R.E."/>
            <person name="Teixeira E.C."/>
            <person name="Tezza R.I.D."/>
            <person name="Trindade dos Santos M."/>
            <person name="Truffi D."/>
            <person name="Tsai S.M."/>
            <person name="White F.F."/>
            <person name="Setubal J.C."/>
            <person name="Kitajima J.P."/>
        </authorList>
    </citation>
    <scope>NUCLEOTIDE SEQUENCE [LARGE SCALE GENOMIC DNA]</scope>
    <source>
        <strain>ATCC 33913 / DSM 3586 / NCPPB 528 / LMG 568 / P 25</strain>
    </source>
</reference>